<comment type="function">
    <text evidence="2">Required for the assembly of axonemal inner and outer dynein arms. Involved in preassembly of dyneins into complexes before their transport into cilia.</text>
</comment>
<comment type="subcellular location">
    <subcellularLocation>
        <location evidence="2">Cytoplasm</location>
    </subcellularLocation>
</comment>
<comment type="disruption phenotype">
    <text evidence="2">Nonmotile flagella, with paralyzed half-length flagella and disrupted outer dynein arms assembly.</text>
</comment>
<comment type="similarity">
    <text evidence="3">Belongs to the DNAAF3 family.</text>
</comment>
<reference key="1">
    <citation type="journal article" date="2012" name="Nat. Genet.">
        <title>Mutations in axonemal dynein assembly factor DNAAF3 cause primary ciliary dyskinesia.</title>
        <authorList>
            <person name="Mitchison H.M."/>
            <person name="Schmidts M."/>
            <person name="Loges N.T."/>
            <person name="Freshour J."/>
            <person name="Dritsoula A."/>
            <person name="Hirst R.A."/>
            <person name="O'Callaghan C."/>
            <person name="Blau H."/>
            <person name="Al Dabbagh M."/>
            <person name="Olbrich H."/>
            <person name="Beales P.L."/>
            <person name="Yagi T."/>
            <person name="Mussaffi H."/>
            <person name="Chung E.M."/>
            <person name="Omran H."/>
            <person name="Mitchell D.R."/>
        </authorList>
    </citation>
    <scope>NUCLEOTIDE SEQUENCE [GENOMIC DNA]</scope>
    <scope>FUNCTION</scope>
    <scope>SUBCELLULAR LOCATION</scope>
    <scope>DISRUPTION PHENOTYPE</scope>
    <source>
        <strain>CC-503</strain>
    </source>
</reference>
<reference key="2">
    <citation type="journal article" date="1979" name="J. Biol. Chem.">
        <title>Paralyzed flagella mutants of Chlamydomonas reinhardtii. Defective for axonemal doublet microtubule arms.</title>
        <authorList>
            <person name="Huang B."/>
            <person name="Piperno G."/>
            <person name="Luck D.J."/>
        </authorList>
    </citation>
    <scope>IDENTIFICATION</scope>
</reference>
<reference key="3">
    <citation type="journal article" date="1992" name="J. Cell Biol.">
        <title>The inner dynein arms I2 interact with a 'dynein regulatory complex' in Chlamydomonas flagella.</title>
        <authorList>
            <person name="Piperno G."/>
            <person name="Mead K."/>
            <person name="Shestak W."/>
        </authorList>
    </citation>
    <scope>IDENTIFICATION</scope>
</reference>
<keyword id="KW-0970">Cilium biogenesis/degradation</keyword>
<keyword id="KW-0963">Cytoplasm</keyword>
<protein>
    <recommendedName>
        <fullName>Dynein axonemal assembly factor 3 homolog</fullName>
    </recommendedName>
    <alternativeName>
        <fullName>Dynein assembly blocked protein 1</fullName>
    </alternativeName>
    <alternativeName>
        <fullName>Paralyzed flagella protein 22</fullName>
    </alternativeName>
</protein>
<feature type="chain" id="PRO_0000416897" description="Dynein axonemal assembly factor 3 homolog">
    <location>
        <begin position="1"/>
        <end position="710"/>
    </location>
</feature>
<feature type="region of interest" description="Disordered" evidence="1">
    <location>
        <begin position="403"/>
        <end position="487"/>
    </location>
</feature>
<feature type="compositionally biased region" description="Gly residues" evidence="1">
    <location>
        <begin position="404"/>
        <end position="416"/>
    </location>
</feature>
<feature type="compositionally biased region" description="Low complexity" evidence="1">
    <location>
        <begin position="417"/>
        <end position="438"/>
    </location>
</feature>
<feature type="compositionally biased region" description="Gly residues" evidence="1">
    <location>
        <begin position="453"/>
        <end position="462"/>
    </location>
</feature>
<feature type="compositionally biased region" description="Low complexity" evidence="1">
    <location>
        <begin position="478"/>
        <end position="487"/>
    </location>
</feature>
<sequence length="710" mass="72736">MDEHNVHHFWGISPAVDLGTLLPTGDGAADLPVDQPVRFLQVAPYDARHTLTTLSRACRHPALMRQLPPGQPACRLYVWEDSPEGLARHVLLAAVLLDGGVPAAQRGQLLLELHGNAVLRRRAAEYLDEKARQLESLFVGLAAGQPPPAGPEAEARGLAALAALLDLSLLKFQEKDLIVEALQRWRLPNPTSSTSTSAASASAAAAPYDMVAAWDGRCRKVYGERYDFRRNMVDWDYHMRLQPAGTPGCDPASGSIIHFHHFRHWRLHGVAHELRDSAYNSANRCRGEGGVGEFKDRTGRDVGRSVSAWGFWADVLNSPYHAFGTACEQPEFYRITNKQFVRTAVDVAEHNIAALLHELRTGRRLELGEGQEAHRAQAARGPTTLEDLTAAAEEAAAAASGAGAEAGAGAGPGGEAAAGASSSSGKEEAAAAAAAGKEQGQGEGQGEDWTAGSGSGAPGAGTGQAVAEGREGPGGPQDSDPAAAASTAAPAAAAAAASSSSTSVPTYSSGGRAQVAKAMAAAAAAAGAGAGAGAEASSSGAASAASAAPTAGASSGAADGKAAEAAAAPLDEAAREQMAAEEAAVRAAEAALDAAARQRAGRFRLVLVTGDLAKTLTGRAKYAGAFSGLSLGHRHTHMLEPQYKLAAAAAPGARLVAENARHVLQLSQEQAALFAAKMDELAAAGGWRPLPAAQRPPGITEAAAVYVRAA</sequence>
<organism>
    <name type="scientific">Chlamydomonas reinhardtii</name>
    <name type="common">Chlamydomonas smithii</name>
    <dbReference type="NCBI Taxonomy" id="3055"/>
    <lineage>
        <taxon>Eukaryota</taxon>
        <taxon>Viridiplantae</taxon>
        <taxon>Chlorophyta</taxon>
        <taxon>core chlorophytes</taxon>
        <taxon>Chlorophyceae</taxon>
        <taxon>CS clade</taxon>
        <taxon>Chlamydomonadales</taxon>
        <taxon>Chlamydomonadaceae</taxon>
        <taxon>Chlamydomonas</taxon>
    </lineage>
</organism>
<proteinExistence type="inferred from homology"/>
<gene>
    <name type="primary">DAB1</name>
    <name type="synonym">PF22</name>
</gene>
<dbReference type="EMBL" id="HQ424432">
    <property type="protein sequence ID" value="AEC04845.1"/>
    <property type="molecule type" value="Genomic_DNA"/>
</dbReference>
<dbReference type="GO" id="GO:0005737">
    <property type="term" value="C:cytoplasm"/>
    <property type="evidence" value="ECO:0000314"/>
    <property type="project" value="UniProtKB"/>
</dbReference>
<dbReference type="GO" id="GO:0070286">
    <property type="term" value="P:axonemal dynein complex assembly"/>
    <property type="evidence" value="ECO:0000315"/>
    <property type="project" value="UniProtKB"/>
</dbReference>
<dbReference type="InterPro" id="IPR039304">
    <property type="entry name" value="DNAAF3"/>
</dbReference>
<dbReference type="InterPro" id="IPR028235">
    <property type="entry name" value="DNAAF3_C"/>
</dbReference>
<dbReference type="InterPro" id="IPR027974">
    <property type="entry name" value="DUF4470"/>
</dbReference>
<dbReference type="PANTHER" id="PTHR22118">
    <property type="entry name" value="DYNEIN ASSEMBLY FACTOR 3, AXONEMAL"/>
    <property type="match status" value="1"/>
</dbReference>
<dbReference type="PANTHER" id="PTHR22118:SF14">
    <property type="entry name" value="DYNEIN AXONEMAL ASSEMBLY FACTOR 3"/>
    <property type="match status" value="1"/>
</dbReference>
<dbReference type="Pfam" id="PF14737">
    <property type="entry name" value="DUF4470"/>
    <property type="match status" value="1"/>
</dbReference>
<dbReference type="Pfam" id="PF14740">
    <property type="entry name" value="DUF4471"/>
    <property type="match status" value="2"/>
</dbReference>
<accession>F5A894</accession>
<evidence type="ECO:0000256" key="1">
    <source>
        <dbReference type="SAM" id="MobiDB-lite"/>
    </source>
</evidence>
<evidence type="ECO:0000269" key="2">
    <source>
    </source>
</evidence>
<evidence type="ECO:0000305" key="3"/>
<name>DAAF3_CHLRE</name>